<feature type="chain" id="PRO_0000114264" description="Chromosomal replication initiator protein DnaA">
    <location>
        <begin position="1"/>
        <end position="453"/>
    </location>
</feature>
<feature type="region of interest" description="Domain I, interacts with DnaA modulators" evidence="1">
    <location>
        <begin position="1"/>
        <end position="71"/>
    </location>
</feature>
<feature type="region of interest" description="Domain II" evidence="1">
    <location>
        <begin position="71"/>
        <end position="114"/>
    </location>
</feature>
<feature type="region of interest" description="Domain III, AAA+ region" evidence="1">
    <location>
        <begin position="115"/>
        <end position="331"/>
    </location>
</feature>
<feature type="region of interest" description="Domain IV, binds dsDNA" evidence="1">
    <location>
        <begin position="332"/>
        <end position="453"/>
    </location>
</feature>
<feature type="binding site" evidence="1">
    <location>
        <position position="159"/>
    </location>
    <ligand>
        <name>ATP</name>
        <dbReference type="ChEBI" id="CHEBI:30616"/>
    </ligand>
</feature>
<feature type="binding site" evidence="1">
    <location>
        <position position="161"/>
    </location>
    <ligand>
        <name>ATP</name>
        <dbReference type="ChEBI" id="CHEBI:30616"/>
    </ligand>
</feature>
<feature type="binding site" evidence="1">
    <location>
        <position position="162"/>
    </location>
    <ligand>
        <name>ATP</name>
        <dbReference type="ChEBI" id="CHEBI:30616"/>
    </ligand>
</feature>
<feature type="binding site" evidence="1">
    <location>
        <position position="163"/>
    </location>
    <ligand>
        <name>ATP</name>
        <dbReference type="ChEBI" id="CHEBI:30616"/>
    </ligand>
</feature>
<sequence>MSEKEIWEKVLEIAQEKLSAVSYSTFLKDTELYTIKDGEAIVLSSIPFNANWLNQQYAEIIQAILFDVVGYEVKPHFITTEELANYSNNETATPKETTKPSTETTEDNHVLGREQFNAHNTFDTFVIGPGNRFPHAASLAVAEAPAKAYNPLFIYGGVGLGKTHLMHAIGHHVLDNNPDAKVIYTSSEKFTNEFIKSIRDNEGEAFRERYRNIDVLLIDDIQFIQNKVQTQEEFFYTFNELHQNNKQIVISSDRPPKEIAQLEDRLRSRFEWGLIVDITPPDYETRMAILQKKIEEEKLDIPPEALNYIANQIQSNIRELEGALTRLLAYSQLLGKPITTELTAEALKDIIQAPKSKKITIQDIQKIVGQYYNVRIEDFSAKKRTKSIAYPRQIAMYLSRELTDFSLPKIGEEFGGRDHTTVIHAHEKISKDLKEDPIFKQEVENLEKEIRNV</sequence>
<dbReference type="EMBL" id="BA000033">
    <property type="protein sequence ID" value="BAB93866.1"/>
    <property type="molecule type" value="Genomic_DNA"/>
</dbReference>
<dbReference type="RefSeq" id="WP_001290433.1">
    <property type="nucleotide sequence ID" value="NC_003923.1"/>
</dbReference>
<dbReference type="SMR" id="P68868"/>
<dbReference type="KEGG" id="sam:MW0001"/>
<dbReference type="HOGENOM" id="CLU_026910_3_1_9"/>
<dbReference type="GO" id="GO:0005737">
    <property type="term" value="C:cytoplasm"/>
    <property type="evidence" value="ECO:0007669"/>
    <property type="project" value="UniProtKB-SubCell"/>
</dbReference>
<dbReference type="GO" id="GO:0005886">
    <property type="term" value="C:plasma membrane"/>
    <property type="evidence" value="ECO:0007669"/>
    <property type="project" value="TreeGrafter"/>
</dbReference>
<dbReference type="GO" id="GO:0005524">
    <property type="term" value="F:ATP binding"/>
    <property type="evidence" value="ECO:0007669"/>
    <property type="project" value="UniProtKB-UniRule"/>
</dbReference>
<dbReference type="GO" id="GO:0016887">
    <property type="term" value="F:ATP hydrolysis activity"/>
    <property type="evidence" value="ECO:0007669"/>
    <property type="project" value="InterPro"/>
</dbReference>
<dbReference type="GO" id="GO:0003688">
    <property type="term" value="F:DNA replication origin binding"/>
    <property type="evidence" value="ECO:0007669"/>
    <property type="project" value="UniProtKB-UniRule"/>
</dbReference>
<dbReference type="GO" id="GO:0008289">
    <property type="term" value="F:lipid binding"/>
    <property type="evidence" value="ECO:0007669"/>
    <property type="project" value="UniProtKB-KW"/>
</dbReference>
<dbReference type="GO" id="GO:0006270">
    <property type="term" value="P:DNA replication initiation"/>
    <property type="evidence" value="ECO:0007669"/>
    <property type="project" value="UniProtKB-UniRule"/>
</dbReference>
<dbReference type="GO" id="GO:0006275">
    <property type="term" value="P:regulation of DNA replication"/>
    <property type="evidence" value="ECO:0007669"/>
    <property type="project" value="UniProtKB-UniRule"/>
</dbReference>
<dbReference type="CDD" id="cd00009">
    <property type="entry name" value="AAA"/>
    <property type="match status" value="1"/>
</dbReference>
<dbReference type="CDD" id="cd06571">
    <property type="entry name" value="Bac_DnaA_C"/>
    <property type="match status" value="1"/>
</dbReference>
<dbReference type="FunFam" id="1.10.1750.10:FF:000003">
    <property type="entry name" value="Chromosomal replication initiator protein DnaA"/>
    <property type="match status" value="1"/>
</dbReference>
<dbReference type="FunFam" id="1.10.8.60:FF:000003">
    <property type="entry name" value="Chromosomal replication initiator protein DnaA"/>
    <property type="match status" value="1"/>
</dbReference>
<dbReference type="FunFam" id="3.40.50.300:FF:000150">
    <property type="entry name" value="Chromosomal replication initiator protein DnaA"/>
    <property type="match status" value="1"/>
</dbReference>
<dbReference type="Gene3D" id="1.10.1750.10">
    <property type="match status" value="1"/>
</dbReference>
<dbReference type="Gene3D" id="1.10.8.60">
    <property type="match status" value="1"/>
</dbReference>
<dbReference type="Gene3D" id="3.30.300.180">
    <property type="match status" value="1"/>
</dbReference>
<dbReference type="Gene3D" id="3.40.50.300">
    <property type="entry name" value="P-loop containing nucleotide triphosphate hydrolases"/>
    <property type="match status" value="1"/>
</dbReference>
<dbReference type="HAMAP" id="MF_00377">
    <property type="entry name" value="DnaA_bact"/>
    <property type="match status" value="1"/>
</dbReference>
<dbReference type="InterPro" id="IPR003593">
    <property type="entry name" value="AAA+_ATPase"/>
</dbReference>
<dbReference type="InterPro" id="IPR001957">
    <property type="entry name" value="Chromosome_initiator_DnaA"/>
</dbReference>
<dbReference type="InterPro" id="IPR020591">
    <property type="entry name" value="Chromosome_initiator_DnaA-like"/>
</dbReference>
<dbReference type="InterPro" id="IPR018312">
    <property type="entry name" value="Chromosome_initiator_DnaA_CS"/>
</dbReference>
<dbReference type="InterPro" id="IPR013159">
    <property type="entry name" value="DnaA_C"/>
</dbReference>
<dbReference type="InterPro" id="IPR013317">
    <property type="entry name" value="DnaA_dom"/>
</dbReference>
<dbReference type="InterPro" id="IPR024633">
    <property type="entry name" value="DnaA_N_dom"/>
</dbReference>
<dbReference type="InterPro" id="IPR038454">
    <property type="entry name" value="DnaA_N_sf"/>
</dbReference>
<dbReference type="InterPro" id="IPR027417">
    <property type="entry name" value="P-loop_NTPase"/>
</dbReference>
<dbReference type="InterPro" id="IPR010921">
    <property type="entry name" value="Trp_repressor/repl_initiator"/>
</dbReference>
<dbReference type="NCBIfam" id="TIGR00362">
    <property type="entry name" value="DnaA"/>
    <property type="match status" value="1"/>
</dbReference>
<dbReference type="PANTHER" id="PTHR30050">
    <property type="entry name" value="CHROMOSOMAL REPLICATION INITIATOR PROTEIN DNAA"/>
    <property type="match status" value="1"/>
</dbReference>
<dbReference type="PANTHER" id="PTHR30050:SF2">
    <property type="entry name" value="CHROMOSOMAL REPLICATION INITIATOR PROTEIN DNAA"/>
    <property type="match status" value="1"/>
</dbReference>
<dbReference type="Pfam" id="PF00308">
    <property type="entry name" value="Bac_DnaA"/>
    <property type="match status" value="1"/>
</dbReference>
<dbReference type="Pfam" id="PF08299">
    <property type="entry name" value="Bac_DnaA_C"/>
    <property type="match status" value="1"/>
</dbReference>
<dbReference type="Pfam" id="PF11638">
    <property type="entry name" value="DnaA_N"/>
    <property type="match status" value="1"/>
</dbReference>
<dbReference type="PRINTS" id="PR00051">
    <property type="entry name" value="DNAA"/>
</dbReference>
<dbReference type="SMART" id="SM00382">
    <property type="entry name" value="AAA"/>
    <property type="match status" value="1"/>
</dbReference>
<dbReference type="SMART" id="SM00760">
    <property type="entry name" value="Bac_DnaA_C"/>
    <property type="match status" value="1"/>
</dbReference>
<dbReference type="SUPFAM" id="SSF52540">
    <property type="entry name" value="P-loop containing nucleoside triphosphate hydrolases"/>
    <property type="match status" value="1"/>
</dbReference>
<dbReference type="SUPFAM" id="SSF48295">
    <property type="entry name" value="TrpR-like"/>
    <property type="match status" value="1"/>
</dbReference>
<dbReference type="PROSITE" id="PS01008">
    <property type="entry name" value="DNAA"/>
    <property type="match status" value="1"/>
</dbReference>
<protein>
    <recommendedName>
        <fullName evidence="1">Chromosomal replication initiator protein DnaA</fullName>
    </recommendedName>
</protein>
<name>DNAA_STAAW</name>
<gene>
    <name evidence="1" type="primary">dnaA</name>
    <name type="ordered locus">MW0001</name>
</gene>
<reference key="1">
    <citation type="journal article" date="2002" name="Lancet">
        <title>Genome and virulence determinants of high virulence community-acquired MRSA.</title>
        <authorList>
            <person name="Baba T."/>
            <person name="Takeuchi F."/>
            <person name="Kuroda M."/>
            <person name="Yuzawa H."/>
            <person name="Aoki K."/>
            <person name="Oguchi A."/>
            <person name="Nagai Y."/>
            <person name="Iwama N."/>
            <person name="Asano K."/>
            <person name="Naimi T."/>
            <person name="Kuroda H."/>
            <person name="Cui L."/>
            <person name="Yamamoto K."/>
            <person name="Hiramatsu K."/>
        </authorList>
    </citation>
    <scope>NUCLEOTIDE SEQUENCE [LARGE SCALE GENOMIC DNA]</scope>
    <source>
        <strain>MW2</strain>
    </source>
</reference>
<proteinExistence type="inferred from homology"/>
<comment type="function">
    <text evidence="1">Plays an essential role in the initiation and regulation of chromosomal replication. ATP-DnaA binds to the origin of replication (oriC) to initiate formation of the DNA replication initiation complex once per cell cycle. Binds the DnaA box (a 9 base pair repeat at the origin) and separates the double-stranded (ds)DNA. Forms a right-handed helical filament on oriC DNA; dsDNA binds to the exterior of the filament while single-stranded (ss)DNA is stabiized in the filament's interior. The ATP-DnaA-oriC complex binds and stabilizes one strand of the AT-rich DNA unwinding element (DUE), permitting loading of DNA polymerase. After initiation quickly degrades to an ADP-DnaA complex that is not apt for DNA replication. Binds acidic phospholipids.</text>
</comment>
<comment type="subunit">
    <text evidence="1">Oligomerizes as a right-handed, spiral filament on DNA at oriC.</text>
</comment>
<comment type="subcellular location">
    <subcellularLocation>
        <location evidence="1">Cytoplasm</location>
    </subcellularLocation>
</comment>
<comment type="domain">
    <text evidence="1">Domain I is involved in oligomerization and binding regulators, domain II is flexibile and of varying length in different bacteria, domain III forms the AAA+ region, while domain IV binds dsDNA.</text>
</comment>
<comment type="similarity">
    <text evidence="1">Belongs to the DnaA family.</text>
</comment>
<keyword id="KW-0067">ATP-binding</keyword>
<keyword id="KW-0963">Cytoplasm</keyword>
<keyword id="KW-0235">DNA replication</keyword>
<keyword id="KW-0238">DNA-binding</keyword>
<keyword id="KW-0446">Lipid-binding</keyword>
<keyword id="KW-0547">Nucleotide-binding</keyword>
<accession>P68868</accession>
<accession>P49994</accession>
<organism>
    <name type="scientific">Staphylococcus aureus (strain MW2)</name>
    <dbReference type="NCBI Taxonomy" id="196620"/>
    <lineage>
        <taxon>Bacteria</taxon>
        <taxon>Bacillati</taxon>
        <taxon>Bacillota</taxon>
        <taxon>Bacilli</taxon>
        <taxon>Bacillales</taxon>
        <taxon>Staphylococcaceae</taxon>
        <taxon>Staphylococcus</taxon>
    </lineage>
</organism>
<evidence type="ECO:0000255" key="1">
    <source>
        <dbReference type="HAMAP-Rule" id="MF_00377"/>
    </source>
</evidence>